<keyword id="KW-0002">3D-structure</keyword>
<keyword id="KW-0119">Carbohydrate metabolism</keyword>
<keyword id="KW-0326">Glycosidase</keyword>
<keyword id="KW-0378">Hydrolase</keyword>
<keyword id="KW-0624">Polysaccharide degradation</keyword>
<keyword id="KW-1185">Reference proteome</keyword>
<keyword id="KW-0964">Secreted</keyword>
<keyword id="KW-0732">Signal</keyword>
<proteinExistence type="evidence at protein level"/>
<comment type="function">
    <text evidence="3">Involved in the degradation of plant cell wall polysaccharides. Catalyzes the deacetylation of acetylated birchwood xylan and glucomannan, with a large preference for the latter, and of the synthetic substrate 4-nitrophenyl acetate (4-NPAc).</text>
</comment>
<comment type="catalytic activity">
    <reaction evidence="3">
        <text>Deacetylation of xylans and xylo-oligosaccharides.</text>
        <dbReference type="EC" id="3.1.1.72"/>
    </reaction>
</comment>
<comment type="biophysicochemical properties">
    <kinetics>
        <KM evidence="3">262 uM for 4-nitrophenyl acetate</KM>
        <KM evidence="3">4.6 mM for acetylated birchwood xylan</KM>
        <KM evidence="3">0.84 mM for acetylated glucomannan</KM>
        <text evidence="3">kcat is 49820 min(-1) for the deacetylation of 4-nitrophenyl acetate. kcat is 66 min(-1) for the deacetylation of birchwood xylan. kcat is 1348 min(-1) for the deacetylation of glucomannan.</text>
    </kinetics>
</comment>
<comment type="pathway">
    <text evidence="3">Glycan degradation; xylan degradation.</text>
</comment>
<comment type="subcellular location">
    <subcellularLocation>
        <location evidence="5">Secreted</location>
    </subcellularLocation>
</comment>
<comment type="similarity">
    <text evidence="6">Belongs to the carbohydrate esterase 2 (CE2) family.</text>
</comment>
<name>CE2B_CELJU</name>
<protein>
    <recommendedName>
        <fullName evidence="6">Acetylxylan esterase / glucomannan deacetylase</fullName>
        <ecNumber evidence="3">3.1.1.-</ecNumber>
        <ecNumber evidence="3">3.1.1.72</ecNumber>
    </recommendedName>
    <alternativeName>
        <fullName evidence="4">CjCE2B</fullName>
    </alternativeName>
</protein>
<dbReference type="EC" id="3.1.1.-" evidence="3"/>
<dbReference type="EC" id="3.1.1.72" evidence="3"/>
<dbReference type="EMBL" id="CP000934">
    <property type="protein sequence ID" value="ACE85322.1"/>
    <property type="molecule type" value="Genomic_DNA"/>
</dbReference>
<dbReference type="RefSeq" id="WP_012488681.1">
    <property type="nucleotide sequence ID" value="NC_010995.1"/>
</dbReference>
<dbReference type="PDB" id="2W9X">
    <property type="method" value="X-ray"/>
    <property type="resolution" value="2.00 A"/>
    <property type="chains" value="A/B=1-360"/>
</dbReference>
<dbReference type="PDBsum" id="2W9X"/>
<dbReference type="SMR" id="B3PDE5"/>
<dbReference type="STRING" id="498211.CJA_3103"/>
<dbReference type="KEGG" id="cja:CJA_3103"/>
<dbReference type="eggNOG" id="COG2755">
    <property type="taxonomic scope" value="Bacteria"/>
</dbReference>
<dbReference type="HOGENOM" id="CLU_042506_1_0_6"/>
<dbReference type="OrthoDB" id="9801375at2"/>
<dbReference type="UniPathway" id="UPA00114"/>
<dbReference type="EvolutionaryTrace" id="B3PDE5"/>
<dbReference type="Proteomes" id="UP000001036">
    <property type="component" value="Chromosome"/>
</dbReference>
<dbReference type="GO" id="GO:0005576">
    <property type="term" value="C:extracellular region"/>
    <property type="evidence" value="ECO:0007669"/>
    <property type="project" value="UniProtKB-SubCell"/>
</dbReference>
<dbReference type="GO" id="GO:0046555">
    <property type="term" value="F:acetylxylan esterase activity"/>
    <property type="evidence" value="ECO:0000314"/>
    <property type="project" value="UniProtKB"/>
</dbReference>
<dbReference type="GO" id="GO:0016798">
    <property type="term" value="F:hydrolase activity, acting on glycosyl bonds"/>
    <property type="evidence" value="ECO:0007669"/>
    <property type="project" value="UniProtKB-KW"/>
</dbReference>
<dbReference type="GO" id="GO:2000884">
    <property type="term" value="P:glucomannan catabolic process"/>
    <property type="evidence" value="ECO:0000314"/>
    <property type="project" value="UniProtKB"/>
</dbReference>
<dbReference type="GO" id="GO:0045493">
    <property type="term" value="P:xylan catabolic process"/>
    <property type="evidence" value="ECO:0000314"/>
    <property type="project" value="UniProtKB"/>
</dbReference>
<dbReference type="CDD" id="cd01831">
    <property type="entry name" value="Endoglucanase_E_like"/>
    <property type="match status" value="1"/>
</dbReference>
<dbReference type="FunFam" id="3.40.50.1110:FF:000057">
    <property type="entry name" value="Acetylxylan esterase / glucomannan deacetylase"/>
    <property type="match status" value="1"/>
</dbReference>
<dbReference type="Gene3D" id="2.60.120.260">
    <property type="entry name" value="Galactose-binding domain-like"/>
    <property type="match status" value="1"/>
</dbReference>
<dbReference type="Gene3D" id="3.40.50.1110">
    <property type="entry name" value="SGNH hydrolase"/>
    <property type="match status" value="1"/>
</dbReference>
<dbReference type="InterPro" id="IPR040794">
    <property type="entry name" value="CE2_N"/>
</dbReference>
<dbReference type="InterPro" id="IPR037461">
    <property type="entry name" value="CtCE2-like_dom"/>
</dbReference>
<dbReference type="InterPro" id="IPR052762">
    <property type="entry name" value="PCW_deacetylase/CE"/>
</dbReference>
<dbReference type="InterPro" id="IPR013830">
    <property type="entry name" value="SGNH_hydro"/>
</dbReference>
<dbReference type="InterPro" id="IPR036514">
    <property type="entry name" value="SGNH_hydro_sf"/>
</dbReference>
<dbReference type="PANTHER" id="PTHR37834:SF2">
    <property type="entry name" value="ESTERASE, SGNH HYDROLASE-TYPE"/>
    <property type="match status" value="1"/>
</dbReference>
<dbReference type="PANTHER" id="PTHR37834">
    <property type="entry name" value="GDSL-LIKE LIPASE/ACYLHYDROLASE DOMAIN PROTEIN (AFU_ORTHOLOGUE AFUA_2G00620)"/>
    <property type="match status" value="1"/>
</dbReference>
<dbReference type="Pfam" id="PF17996">
    <property type="entry name" value="CE2_N"/>
    <property type="match status" value="1"/>
</dbReference>
<dbReference type="Pfam" id="PF13472">
    <property type="entry name" value="Lipase_GDSL_2"/>
    <property type="match status" value="1"/>
</dbReference>
<dbReference type="SUPFAM" id="SSF52266">
    <property type="entry name" value="SGNH hydrolase"/>
    <property type="match status" value="1"/>
</dbReference>
<gene>
    <name evidence="7" type="primary">ce2C</name>
    <name evidence="7" type="ordered locus">CJA_3103</name>
</gene>
<accession>B3PDE5</accession>
<feature type="signal peptide" evidence="2">
    <location>
        <begin position="1"/>
        <end position="21"/>
    </location>
</feature>
<feature type="chain" id="PRO_0000434124" description="Acetylxylan esterase / glucomannan deacetylase">
    <location>
        <begin position="22"/>
        <end position="360"/>
    </location>
</feature>
<feature type="active site" description="Nucleophile" evidence="6">
    <location>
        <position position="151"/>
    </location>
</feature>
<feature type="site" description="Transition state stabilizer" evidence="1">
    <location>
        <position position="199"/>
    </location>
</feature>
<feature type="site" description="Transition state stabilizer" evidence="1">
    <location>
        <position position="247"/>
    </location>
</feature>
<feature type="site" description="Increases nucleophilicity of active site Ser" evidence="6">
    <location>
        <position position="336"/>
    </location>
</feature>
<feature type="strand" evidence="8">
    <location>
        <begin position="31"/>
        <end position="34"/>
    </location>
</feature>
<feature type="strand" evidence="8">
    <location>
        <begin position="37"/>
        <end position="39"/>
    </location>
</feature>
<feature type="strand" evidence="8">
    <location>
        <begin position="47"/>
        <end position="50"/>
    </location>
</feature>
<feature type="strand" evidence="8">
    <location>
        <begin position="56"/>
        <end position="59"/>
    </location>
</feature>
<feature type="strand" evidence="8">
    <location>
        <begin position="68"/>
        <end position="74"/>
    </location>
</feature>
<feature type="strand" evidence="8">
    <location>
        <begin position="76"/>
        <end position="80"/>
    </location>
</feature>
<feature type="strand" evidence="8">
    <location>
        <begin position="87"/>
        <end position="90"/>
    </location>
</feature>
<feature type="strand" evidence="8">
    <location>
        <begin position="93"/>
        <end position="97"/>
    </location>
</feature>
<feature type="strand" evidence="8">
    <location>
        <begin position="109"/>
        <end position="113"/>
    </location>
</feature>
<feature type="strand" evidence="8">
    <location>
        <begin position="122"/>
        <end position="124"/>
    </location>
</feature>
<feature type="strand" evidence="8">
    <location>
        <begin position="144"/>
        <end position="150"/>
    </location>
</feature>
<feature type="helix" evidence="8">
    <location>
        <begin position="151"/>
        <end position="154"/>
    </location>
</feature>
<feature type="turn" evidence="8">
    <location>
        <begin position="155"/>
        <end position="159"/>
    </location>
</feature>
<feature type="helix" evidence="8">
    <location>
        <begin position="167"/>
        <end position="173"/>
    </location>
</feature>
<feature type="helix" evidence="8">
    <location>
        <begin position="176"/>
        <end position="178"/>
    </location>
</feature>
<feature type="helix" evidence="8">
    <location>
        <begin position="180"/>
        <end position="187"/>
    </location>
</feature>
<feature type="strand" evidence="8">
    <location>
        <begin position="191"/>
        <end position="196"/>
    </location>
</feature>
<feature type="helix" evidence="8">
    <location>
        <begin position="206"/>
        <end position="208"/>
    </location>
</feature>
<feature type="helix" evidence="8">
    <location>
        <begin position="215"/>
        <end position="218"/>
    </location>
</feature>
<feature type="strand" evidence="8">
    <location>
        <begin position="221"/>
        <end position="225"/>
    </location>
</feature>
<feature type="strand" evidence="8">
    <location>
        <begin position="238"/>
        <end position="243"/>
    </location>
</feature>
<feature type="helix" evidence="8">
    <location>
        <begin position="246"/>
        <end position="249"/>
    </location>
</feature>
<feature type="helix" evidence="8">
    <location>
        <begin position="262"/>
        <end position="283"/>
    </location>
</feature>
<feature type="strand" evidence="8">
    <location>
        <begin position="288"/>
        <end position="295"/>
    </location>
</feature>
<feature type="helix" evidence="8">
    <location>
        <begin position="297"/>
        <end position="299"/>
    </location>
</feature>
<feature type="helix" evidence="8">
    <location>
        <begin position="300"/>
        <end position="314"/>
    </location>
</feature>
<feature type="strand" evidence="8">
    <location>
        <begin position="320"/>
        <end position="325"/>
    </location>
</feature>
<feature type="helix" evidence="8">
    <location>
        <begin position="333"/>
        <end position="335"/>
    </location>
</feature>
<feature type="helix" evidence="8">
    <location>
        <begin position="339"/>
        <end position="354"/>
    </location>
</feature>
<organism>
    <name type="scientific">Cellvibrio japonicus (strain Ueda107)</name>
    <name type="common">Pseudomonas fluorescens subsp. cellulosa</name>
    <dbReference type="NCBI Taxonomy" id="498211"/>
    <lineage>
        <taxon>Bacteria</taxon>
        <taxon>Pseudomonadati</taxon>
        <taxon>Pseudomonadota</taxon>
        <taxon>Gammaproteobacteria</taxon>
        <taxon>Cellvibrionales</taxon>
        <taxon>Cellvibrionaceae</taxon>
        <taxon>Cellvibrio</taxon>
    </lineage>
</organism>
<sequence length="360" mass="40063">MKPHALIGLLAGMLLSSSLYAADSTKPLPLHIGGRVLVESPANQPVSYTYSWPAVYFETAFKGQSLTLKFDDDQNIFRLIVDDKAPVVINKPGKVDYPVESLAPGKHRVRLEKLTETQSTSGRFLGFYTDPSAKPLALPKRKRQIEFIGDSFTVGYGNTSPSRECTDEELFKTTNSQMAFGPLTAKAFDADYQINASSGFGIVRNYNGTSPDKSLLSLYPYTLNNPDQLYHNKHWKPQVIVIGLGTNDFSTALNDNERWKTREALHADYVANYVKFVKQLHSNNARAQFILMNSDQSNGEIAEQVGKVVAQLKGGGLHQVEQIVFKGLDYSGCHWHPSANDDQLLANLLITHLQQKKGIW</sequence>
<reference key="1">
    <citation type="journal article" date="2008" name="J. Bacteriol.">
        <title>Insights into plant cell wall degradation from the genome sequence of the soil bacterium Cellvibrio japonicus.</title>
        <authorList>
            <person name="DeBoy R.T."/>
            <person name="Mongodin E.F."/>
            <person name="Fouts D.E."/>
            <person name="Tailford L.E."/>
            <person name="Khouri H."/>
            <person name="Emerson J.B."/>
            <person name="Mohamoud Y."/>
            <person name="Watkins K."/>
            <person name="Henrissat B."/>
            <person name="Gilbert H.J."/>
            <person name="Nelson K.E."/>
        </authorList>
    </citation>
    <scope>NUCLEOTIDE SEQUENCE [LARGE SCALE GENOMIC DNA]</scope>
    <source>
        <strain>Ueda107</strain>
    </source>
</reference>
<reference key="2">
    <citation type="journal article" date="2009" name="PLoS Biol.">
        <title>The active site of a carbohydrate esterase displays divergent catalytic and noncatalytic binding functions.</title>
        <authorList>
            <person name="Montanier C."/>
            <person name="Money V.A."/>
            <person name="Pires V.M."/>
            <person name="Flint J.E."/>
            <person name="Pinheiro B.A."/>
            <person name="Goyal A."/>
            <person name="Prates J.A."/>
            <person name="Izumi A."/>
            <person name="Stalbrand H."/>
            <person name="Morland C."/>
            <person name="Cartmell A."/>
            <person name="Kolenova K."/>
            <person name="Topakas E."/>
            <person name="Dodson E.J."/>
            <person name="Bolam D.N."/>
            <person name="Davies G.J."/>
            <person name="Fontes C.M."/>
            <person name="Gilbert H.J."/>
        </authorList>
    </citation>
    <scope>X-RAY CRYSTALLOGRAPHY (2.00 ANGSTROMS)</scope>
    <scope>FUNCTION</scope>
    <scope>CATALYTIC ACTIVITY</scope>
    <scope>BIOPHYSICOCHEMICAL PROPERTIES</scope>
    <scope>ACTIVE SITE</scope>
</reference>
<evidence type="ECO:0000250" key="1">
    <source>
        <dbReference type="UniProtKB" id="B3PIB0"/>
    </source>
</evidence>
<evidence type="ECO:0000255" key="2"/>
<evidence type="ECO:0000269" key="3">
    <source>
    </source>
</evidence>
<evidence type="ECO:0000303" key="4">
    <source>
    </source>
</evidence>
<evidence type="ECO:0000305" key="5"/>
<evidence type="ECO:0000305" key="6">
    <source>
    </source>
</evidence>
<evidence type="ECO:0000312" key="7">
    <source>
        <dbReference type="EMBL" id="ACE85322.1"/>
    </source>
</evidence>
<evidence type="ECO:0007829" key="8">
    <source>
        <dbReference type="PDB" id="2W9X"/>
    </source>
</evidence>